<protein>
    <recommendedName>
        <fullName>Corticoliberin-1</fullName>
    </recommendedName>
    <alternativeName>
        <fullName>Corticotropin-releasing factor 1</fullName>
        <shortName>CRF 1</shortName>
    </alternativeName>
    <alternativeName>
        <fullName>Corticotropin-releasing hormone 1</fullName>
    </alternativeName>
</protein>
<keyword id="KW-0027">Amidation</keyword>
<keyword id="KW-0165">Cleavage on pair of basic residues</keyword>
<keyword id="KW-0372">Hormone</keyword>
<keyword id="KW-0964">Secreted</keyword>
<keyword id="KW-0732">Signal</keyword>
<gene>
    <name type="primary">crf1</name>
</gene>
<accession>P13241</accession>
<sequence>MKLNFLVTTVALLVAFPPPYECRAIDSSSNQPATDPDGERQSAPVLARLGEEYFIRLGNRYQNSLRSSPDTYPETSQYPKRALQLQLTQRLLEGKVGNVGRWDGNYALRALDSEERERRSEEPPISLDLTFHLLREVLEMARAEQLAQQAHSNRKMMEIFGK</sequence>
<feature type="signal peptide" evidence="1">
    <location>
        <begin position="1"/>
        <end position="24"/>
    </location>
</feature>
<feature type="propeptide" id="PRO_0000006226">
    <location>
        <begin position="25"/>
        <end position="119"/>
    </location>
</feature>
<feature type="peptide" id="PRO_0000006227" description="Corticoliberin-1">
    <location>
        <begin position="120"/>
        <end position="160"/>
    </location>
</feature>
<feature type="modified residue" description="Phenylalanine amide" evidence="2">
    <location>
        <position position="160"/>
    </location>
</feature>
<name>CRF1_CATCO</name>
<evidence type="ECO:0000255" key="1"/>
<evidence type="ECO:0000269" key="2">
    <source>
    </source>
</evidence>
<evidence type="ECO:0000305" key="3"/>
<comment type="function">
    <text>This hormone from hypothalamus regulates the release of corticotropin from pituitary gland.</text>
</comment>
<comment type="subcellular location">
    <subcellularLocation>
        <location>Secreted</location>
    </subcellularLocation>
</comment>
<comment type="similarity">
    <text evidence="3">Belongs to the sauvagine/corticotropin-releasing factor/urotensin I family.</text>
</comment>
<dbReference type="EMBL" id="J04116">
    <property type="protein sequence ID" value="AAA81529.1"/>
    <property type="molecule type" value="mRNA"/>
</dbReference>
<dbReference type="EMBL" id="S65264">
    <property type="protein sequence ID" value="AAA15988.1"/>
    <property type="molecule type" value="mRNA"/>
</dbReference>
<dbReference type="PIR" id="A31343">
    <property type="entry name" value="A31343"/>
</dbReference>
<dbReference type="SMR" id="P13241"/>
<dbReference type="GO" id="GO:0005576">
    <property type="term" value="C:extracellular region"/>
    <property type="evidence" value="ECO:0007669"/>
    <property type="project" value="UniProtKB-SubCell"/>
</dbReference>
<dbReference type="GO" id="GO:0005179">
    <property type="term" value="F:hormone activity"/>
    <property type="evidence" value="ECO:0007669"/>
    <property type="project" value="UniProtKB-KW"/>
</dbReference>
<dbReference type="Gene3D" id="6.10.250.1920">
    <property type="match status" value="1"/>
</dbReference>
<dbReference type="InterPro" id="IPR018446">
    <property type="entry name" value="Corticotropin-releasing_fac_CS"/>
</dbReference>
<dbReference type="InterPro" id="IPR000187">
    <property type="entry name" value="CRF"/>
</dbReference>
<dbReference type="InterPro" id="IPR003620">
    <property type="entry name" value="Urocortin_CRF"/>
</dbReference>
<dbReference type="PANTHER" id="PTHR15035:SF9">
    <property type="entry name" value="CORTICOLIBERIN"/>
    <property type="match status" value="1"/>
</dbReference>
<dbReference type="PANTHER" id="PTHR15035">
    <property type="entry name" value="CORTICOLIBERIN/UROCORTIN"/>
    <property type="match status" value="1"/>
</dbReference>
<dbReference type="Pfam" id="PF00473">
    <property type="entry name" value="CRF"/>
    <property type="match status" value="1"/>
</dbReference>
<dbReference type="PRINTS" id="PR01612">
    <property type="entry name" value="CRFFAMILY"/>
</dbReference>
<dbReference type="SMART" id="SM00039">
    <property type="entry name" value="CRF"/>
    <property type="match status" value="1"/>
</dbReference>
<dbReference type="PROSITE" id="PS00511">
    <property type="entry name" value="CRF"/>
    <property type="match status" value="1"/>
</dbReference>
<organism>
    <name type="scientific">Catostomus commersonii</name>
    <name type="common">White sucker</name>
    <name type="synonym">Cyprinus commersonnii</name>
    <dbReference type="NCBI Taxonomy" id="7971"/>
    <lineage>
        <taxon>Eukaryota</taxon>
        <taxon>Metazoa</taxon>
        <taxon>Chordata</taxon>
        <taxon>Craniata</taxon>
        <taxon>Vertebrata</taxon>
        <taxon>Euteleostomi</taxon>
        <taxon>Actinopterygii</taxon>
        <taxon>Neopterygii</taxon>
        <taxon>Teleostei</taxon>
        <taxon>Ostariophysi</taxon>
        <taxon>Cypriniformes</taxon>
        <taxon>Catostomoidei</taxon>
        <taxon>Catostomidae</taxon>
        <taxon>Catostomus</taxon>
    </lineage>
</organism>
<reference key="1">
    <citation type="journal article" date="1988" name="Proc. Natl. Acad. Sci. U.S.A.">
        <title>Cloning and sequence analysis of cDNA for corticotropin-releasing factor precursor from the teleost fish Catostomus commersoni.</title>
        <authorList>
            <person name="Okawara Y."/>
            <person name="Morley S.D."/>
            <person name="Burzio L.O."/>
            <person name="Zwiers H."/>
            <person name="Lederis K."/>
            <person name="Richter D."/>
        </authorList>
    </citation>
    <scope>NUCLEOTIDE SEQUENCE [MRNA]</scope>
    <scope>AMIDATION AT PHE-160</scope>
    <source>
        <tissue>Hypothalamus</tissue>
    </source>
</reference>
<reference key="2">
    <citation type="journal article" date="1991" name="Mol. Mar. Biol. Biotechnol.">
        <title>Corticotropin-releasing factor (CRF) gene family in the brain of the teleost fish Catostomus commersoni (white sucker): molecular analysis predicts distinct precursors for two CRFs and one urotensin I peptide.</title>
        <authorList>
            <person name="Morley S.D."/>
            <person name="Schonrock C."/>
            <person name="Richter D."/>
            <person name="Okawara Y."/>
            <person name="Lederis K."/>
        </authorList>
    </citation>
    <scope>NUCLEOTIDE SEQUENCE [MRNA]</scope>
    <source>
        <tissue>Hypothalamus</tissue>
    </source>
</reference>
<proteinExistence type="evidence at protein level"/>